<sequence>MPSLYGLERSGDVEKLVELLQESEKETVRRRAAEILGNLDEPEPEGIQALVDAMSDDDESVRAAAIDALTQQEAVDALMRGLDQEVPDSGATWAQAEAFVENLESETPELRMAAANVLGLLGVEDTARPLAKQLQTEEHVGVRARVARALGRIEQPAVTGILVDCLHGEPLKVRREAAESLGRLTTEQALDGLLSVVEDDSEAMRRTAVSSLGRFETAEPVDALVERLGDESDLVRRAAVFSLIEILSNVPPDQSHELRETIVDRMSARSDPSIIKSLIEIIDEGTQLHQRRNATWMLGRVAGDQRTKMDAIEALRELLGEDDDLIAQFAATGLAEIGGASVETSLLEVVETQEYGEDAVAMAAFALGKVGGDRSRQRLERLVDETDSEEVRRRAFSAISKLGGKT</sequence>
<gene>
    <name type="ordered locus">OE_2401F</name>
</gene>
<dbReference type="EMBL" id="AM774415">
    <property type="protein sequence ID" value="CAP13657.1"/>
    <property type="molecule type" value="Genomic_DNA"/>
</dbReference>
<dbReference type="RefSeq" id="WP_012289252.1">
    <property type="nucleotide sequence ID" value="NC_010364.1"/>
</dbReference>
<dbReference type="SMR" id="B0R4J2"/>
<dbReference type="EnsemblBacteria" id="CAP13657">
    <property type="protein sequence ID" value="CAP13657"/>
    <property type="gene ID" value="OE_2401F"/>
</dbReference>
<dbReference type="KEGG" id="hsl:OE_2401F"/>
<dbReference type="HOGENOM" id="CLU_053271_0_0_2"/>
<dbReference type="PhylomeDB" id="B0R4J2"/>
<dbReference type="Proteomes" id="UP000001321">
    <property type="component" value="Chromosome"/>
</dbReference>
<dbReference type="GO" id="GO:0016491">
    <property type="term" value="F:oxidoreductase activity"/>
    <property type="evidence" value="ECO:0007669"/>
    <property type="project" value="TreeGrafter"/>
</dbReference>
<dbReference type="GO" id="GO:0006935">
    <property type="term" value="P:chemotaxis"/>
    <property type="evidence" value="ECO:0007669"/>
    <property type="project" value="UniProtKB-KW"/>
</dbReference>
<dbReference type="Gene3D" id="1.25.10.10">
    <property type="entry name" value="Leucine-rich Repeat Variant"/>
    <property type="match status" value="3"/>
</dbReference>
<dbReference type="InterPro" id="IPR011989">
    <property type="entry name" value="ARM-like"/>
</dbReference>
<dbReference type="InterPro" id="IPR016024">
    <property type="entry name" value="ARM-type_fold"/>
</dbReference>
<dbReference type="InterPro" id="IPR000225">
    <property type="entry name" value="Armadillo"/>
</dbReference>
<dbReference type="InterPro" id="IPR004155">
    <property type="entry name" value="PBS_lyase_HEAT"/>
</dbReference>
<dbReference type="PANTHER" id="PTHR12697:SF5">
    <property type="entry name" value="DEOXYHYPUSINE HYDROXYLASE"/>
    <property type="match status" value="1"/>
</dbReference>
<dbReference type="PANTHER" id="PTHR12697">
    <property type="entry name" value="PBS LYASE HEAT-LIKE PROTEIN"/>
    <property type="match status" value="1"/>
</dbReference>
<dbReference type="Pfam" id="PF13646">
    <property type="entry name" value="HEAT_2"/>
    <property type="match status" value="3"/>
</dbReference>
<dbReference type="SMART" id="SM00567">
    <property type="entry name" value="EZ_HEAT"/>
    <property type="match status" value="8"/>
</dbReference>
<dbReference type="SUPFAM" id="SSF48371">
    <property type="entry name" value="ARM repeat"/>
    <property type="match status" value="2"/>
</dbReference>
<evidence type="ECO:0000269" key="1">
    <source>
    </source>
</evidence>
<organism>
    <name type="scientific">Halobacterium salinarum (strain ATCC 29341 / DSM 671 / R1)</name>
    <dbReference type="NCBI Taxonomy" id="478009"/>
    <lineage>
        <taxon>Archaea</taxon>
        <taxon>Methanobacteriati</taxon>
        <taxon>Methanobacteriota</taxon>
        <taxon>Stenosarchaea group</taxon>
        <taxon>Halobacteria</taxon>
        <taxon>Halobacteriales</taxon>
        <taxon>Halobacteriaceae</taxon>
        <taxon>Halobacterium</taxon>
        <taxon>Halobacterium salinarum NRC-34001</taxon>
    </lineage>
</organism>
<accession>B0R4J2</accession>
<keyword id="KW-0145">Chemotaxis</keyword>
<keyword id="KW-0677">Repeat</keyword>
<reference key="1">
    <citation type="journal article" date="2008" name="Genomics">
        <title>Evolution in the laboratory: the genome of Halobacterium salinarum strain R1 compared to that of strain NRC-1.</title>
        <authorList>
            <person name="Pfeiffer F."/>
            <person name="Schuster S.C."/>
            <person name="Broicher A."/>
            <person name="Falb M."/>
            <person name="Palm P."/>
            <person name="Rodewald K."/>
            <person name="Ruepp A."/>
            <person name="Soppa J."/>
            <person name="Tittor J."/>
            <person name="Oesterhelt D."/>
        </authorList>
    </citation>
    <scope>NUCLEOTIDE SEQUENCE [LARGE SCALE GENOMIC DNA]</scope>
    <source>
        <strain>ATCC 29341 / DSM 671 / R1</strain>
    </source>
</reference>
<reference key="2">
    <citation type="journal article" date="2009" name="BMC Microbiol.">
        <title>Identification of Archaea-specific chemotaxis proteins which interact with the flagellar apparatus.</title>
        <authorList>
            <person name="Schlesner M."/>
            <person name="Miller A."/>
            <person name="Streif S."/>
            <person name="Staudinger W.F."/>
            <person name="Muller J."/>
            <person name="Scheffer B."/>
            <person name="Siedler F."/>
            <person name="Oesterhelt D."/>
        </authorList>
    </citation>
    <scope>FUNCTION</scope>
    <scope>INTERACTION WITH CHE PROTEINS</scope>
    <scope>DISRUPTION PHENOTYPE</scope>
    <source>
        <strain>ATCC 29341 / DSM 671 / R1</strain>
    </source>
</reference>
<protein>
    <recommendedName>
        <fullName>HEAT repeat-containing taxis protein OE_2401F</fullName>
    </recommendedName>
</protein>
<comment type="function">
    <text evidence="1">Involved in taxis signal transduction. Essential for the ability to control the direction of flagellar rotation. May have a role between CheY and the flagellum.</text>
</comment>
<comment type="subunit">
    <text evidence="1">Interacts with chemotaxis (Che) proteins.</text>
</comment>
<comment type="disruption phenotype">
    <text evidence="1">Mutants are unable to switch the direction of flagellar rotation. Flagella rotate only clockwise, resulting in exclusively forward swimming cells that are unable to respond to tactic signals.</text>
</comment>
<feature type="chain" id="PRO_0000429074" description="HEAT repeat-containing taxis protein OE_2401F">
    <location>
        <begin position="1"/>
        <end position="406"/>
    </location>
</feature>
<feature type="repeat" description="HEAT 1">
    <location>
        <begin position="7"/>
        <end position="41"/>
    </location>
</feature>
<feature type="repeat" description="HEAT 2">
    <location>
        <begin position="42"/>
        <end position="78"/>
    </location>
</feature>
<feature type="repeat" description="HEAT 3">
    <location>
        <begin position="90"/>
        <end position="127"/>
    </location>
</feature>
<feature type="repeat" description="HEAT 4">
    <location>
        <begin position="153"/>
        <end position="184"/>
    </location>
</feature>
<feature type="repeat" description="HEAT 5">
    <location>
        <begin position="185"/>
        <end position="215"/>
    </location>
</feature>
<feature type="repeat" description="HEAT 6">
    <location>
        <begin position="216"/>
        <end position="252"/>
    </location>
</feature>
<feature type="repeat" description="HEAT 7">
    <location>
        <begin position="370"/>
        <end position="406"/>
    </location>
</feature>
<name>HTAXP_HALS3</name>
<proteinExistence type="evidence at protein level"/>